<name>YSH1_CANGA</name>
<organism>
    <name type="scientific">Candida glabrata (strain ATCC 2001 / BCRC 20586 / JCM 3761 / NBRC 0622 / NRRL Y-65 / CBS 138)</name>
    <name type="common">Yeast</name>
    <name type="synonym">Nakaseomyces glabratus</name>
    <dbReference type="NCBI Taxonomy" id="284593"/>
    <lineage>
        <taxon>Eukaryota</taxon>
        <taxon>Fungi</taxon>
        <taxon>Dikarya</taxon>
        <taxon>Ascomycota</taxon>
        <taxon>Saccharomycotina</taxon>
        <taxon>Saccharomycetes</taxon>
        <taxon>Saccharomycetales</taxon>
        <taxon>Saccharomycetaceae</taxon>
        <taxon>Nakaseomyces</taxon>
    </lineage>
</organism>
<protein>
    <recommendedName>
        <fullName>Endoribonuclease YSH1</fullName>
        <ecNumber>3.1.27.-</ecNumber>
    </recommendedName>
    <alternativeName>
        <fullName>mRNA 3'-end-processing protein YSH1</fullName>
    </alternativeName>
</protein>
<sequence>MDVKERSNQFRFFSLGGGNEVGRSCHIIQFKGKTIMLDAGIHPAYQGMASLPFYDDFDLSIVDVLLISHFHLDHAASLPYVMQKTNFKGRVFMTHPTKAIYRWLLRDFVRVTSIGSQSSNAEDDNLYSNEDLIESFDKIETIDYHSMIDVNGIKFTAFHAGHVLGAAMFQIEIAGLRVLFTGDYSREIDRHLNSAEVPPLPSDILIVESTFGTATHEPRLHREKKLTQLIHSTVNKGGRVLMPVFALGRAQELMLILDEYWSQHKEELGSNQIPIFYASNLARKCLSVFQTYVNMMNDNIRKKFRDSQTNPFIFKNIAYIKNLDEFQDFGPSVMLASPGMLQNGLSRDLLERWCPDEKNLVLITGYSVEGTMAKYLLLEPDTIPSVSNPEVTIPRRCRVEELSFAAHVDFQENLEFIEQINASNIILVHGEPNPMGRLKSALLSNYASFKGTEDEVHVHNPRNCYELDIECKGVKVAKAVGNIVDEIKRTEEEVVKPENDAGQSKEGIEEFTGKTQDVRKDAEGEGAIISSILVSDEKNFDLNLVSLSDLREHHPELSTTVIRERQTIQVDCKKELIYWHICQMFGDVSVLIDDDNVTNTKETKLETSRGMLVLQIMGAIRLTVQHNKAILEWTQGLISDTIADSIIAILMSVDSAPVSVKKSSNSCSHGHEHATPILSQPSETDKIKQVAELFKTQFGDSFTLILNKDDDNDTAEEKEDDEFVKGLITIGKNTASINFTDMCVVECNSNPLKGRVESLLKIGIDMVSSLC</sequence>
<proteinExistence type="inferred from homology"/>
<reference key="1">
    <citation type="journal article" date="2004" name="Nature">
        <title>Genome evolution in yeasts.</title>
        <authorList>
            <person name="Dujon B."/>
            <person name="Sherman D."/>
            <person name="Fischer G."/>
            <person name="Durrens P."/>
            <person name="Casaregola S."/>
            <person name="Lafontaine I."/>
            <person name="de Montigny J."/>
            <person name="Marck C."/>
            <person name="Neuveglise C."/>
            <person name="Talla E."/>
            <person name="Goffard N."/>
            <person name="Frangeul L."/>
            <person name="Aigle M."/>
            <person name="Anthouard V."/>
            <person name="Babour A."/>
            <person name="Barbe V."/>
            <person name="Barnay S."/>
            <person name="Blanchin S."/>
            <person name="Beckerich J.-M."/>
            <person name="Beyne E."/>
            <person name="Bleykasten C."/>
            <person name="Boisrame A."/>
            <person name="Boyer J."/>
            <person name="Cattolico L."/>
            <person name="Confanioleri F."/>
            <person name="de Daruvar A."/>
            <person name="Despons L."/>
            <person name="Fabre E."/>
            <person name="Fairhead C."/>
            <person name="Ferry-Dumazet H."/>
            <person name="Groppi A."/>
            <person name="Hantraye F."/>
            <person name="Hennequin C."/>
            <person name="Jauniaux N."/>
            <person name="Joyet P."/>
            <person name="Kachouri R."/>
            <person name="Kerrest A."/>
            <person name="Koszul R."/>
            <person name="Lemaire M."/>
            <person name="Lesur I."/>
            <person name="Ma L."/>
            <person name="Muller H."/>
            <person name="Nicaud J.-M."/>
            <person name="Nikolski M."/>
            <person name="Oztas S."/>
            <person name="Ozier-Kalogeropoulos O."/>
            <person name="Pellenz S."/>
            <person name="Potier S."/>
            <person name="Richard G.-F."/>
            <person name="Straub M.-L."/>
            <person name="Suleau A."/>
            <person name="Swennen D."/>
            <person name="Tekaia F."/>
            <person name="Wesolowski-Louvel M."/>
            <person name="Westhof E."/>
            <person name="Wirth B."/>
            <person name="Zeniou-Meyer M."/>
            <person name="Zivanovic Y."/>
            <person name="Bolotin-Fukuhara M."/>
            <person name="Thierry A."/>
            <person name="Bouchier C."/>
            <person name="Caudron B."/>
            <person name="Scarpelli C."/>
            <person name="Gaillardin C."/>
            <person name="Weissenbach J."/>
            <person name="Wincker P."/>
            <person name="Souciet J.-L."/>
        </authorList>
    </citation>
    <scope>NUCLEOTIDE SEQUENCE [LARGE SCALE GENOMIC DNA]</scope>
    <source>
        <strain>ATCC 2001 / BCRC 20586 / JCM 3761 / NBRC 0622 / NRRL Y-65 / CBS 138</strain>
    </source>
</reference>
<feature type="chain" id="PRO_0000238899" description="Endoribonuclease YSH1">
    <location>
        <begin position="1"/>
        <end position="771"/>
    </location>
</feature>
<feature type="active site" description="Proton donor" evidence="2">
    <location>
        <position position="407"/>
    </location>
</feature>
<feature type="binding site" evidence="1">
    <location>
        <position position="69"/>
    </location>
    <ligand>
        <name>Zn(2+)</name>
        <dbReference type="ChEBI" id="CHEBI:29105"/>
        <label>1</label>
    </ligand>
</feature>
<feature type="binding site" evidence="1">
    <location>
        <position position="71"/>
    </location>
    <ligand>
        <name>Zn(2+)</name>
        <dbReference type="ChEBI" id="CHEBI:29105"/>
        <label>1</label>
    </ligand>
</feature>
<feature type="binding site" evidence="1">
    <location>
        <position position="73"/>
    </location>
    <ligand>
        <name>Zn(2+)</name>
        <dbReference type="ChEBI" id="CHEBI:29105"/>
        <label>2</label>
    </ligand>
</feature>
<feature type="binding site" evidence="1">
    <location>
        <position position="74"/>
    </location>
    <ligand>
        <name>Zn(2+)</name>
        <dbReference type="ChEBI" id="CHEBI:29105"/>
        <label>2</label>
    </ligand>
</feature>
<feature type="binding site" evidence="1">
    <location>
        <position position="162"/>
    </location>
    <ligand>
        <name>Zn(2+)</name>
        <dbReference type="ChEBI" id="CHEBI:29105"/>
        <label>1</label>
    </ligand>
</feature>
<feature type="binding site" evidence="1">
    <location>
        <position position="183"/>
    </location>
    <ligand>
        <name>Zn(2+)</name>
        <dbReference type="ChEBI" id="CHEBI:29105"/>
        <label>1</label>
    </ligand>
</feature>
<feature type="binding site" evidence="1">
    <location>
        <position position="183"/>
    </location>
    <ligand>
        <name>Zn(2+)</name>
        <dbReference type="ChEBI" id="CHEBI:29105"/>
        <label>2</label>
    </ligand>
</feature>
<feature type="binding site" evidence="1">
    <location>
        <position position="429"/>
    </location>
    <ligand>
        <name>Zn(2+)</name>
        <dbReference type="ChEBI" id="CHEBI:29105"/>
        <label>2</label>
    </ligand>
</feature>
<comment type="function">
    <text evidence="1">Component of the cleavage factor I (CF I) involved in pre-mRNA 3'-end processing.</text>
</comment>
<comment type="subcellular location">
    <subcellularLocation>
        <location evidence="1">Nucleus</location>
    </subcellularLocation>
</comment>
<comment type="similarity">
    <text evidence="3">Belongs to the metallo-beta-lactamase superfamily. RNA-metabolizing metallo-beta-lactamase-like family. CPSF2/YSH1 subfamily.</text>
</comment>
<dbReference type="EC" id="3.1.27.-"/>
<dbReference type="EMBL" id="CR380952">
    <property type="protein sequence ID" value="CAG59113.1"/>
    <property type="molecule type" value="Genomic_DNA"/>
</dbReference>
<dbReference type="RefSeq" id="XP_446189.1">
    <property type="nucleotide sequence ID" value="XM_446189.1"/>
</dbReference>
<dbReference type="SMR" id="Q6FUA5"/>
<dbReference type="FunCoup" id="Q6FUA5">
    <property type="interactions" value="1060"/>
</dbReference>
<dbReference type="STRING" id="284593.Q6FUA5"/>
<dbReference type="EnsemblFungi" id="CAGL0F05005g-T">
    <property type="protein sequence ID" value="CAGL0F05005g-T-p1"/>
    <property type="gene ID" value="CAGL0F05005g"/>
</dbReference>
<dbReference type="KEGG" id="cgr:2887906"/>
<dbReference type="CGD" id="CAL0131318">
    <property type="gene designation" value="CAGL0F05005g"/>
</dbReference>
<dbReference type="VEuPathDB" id="FungiDB:CAGL0F05005g"/>
<dbReference type="eggNOG" id="KOG1137">
    <property type="taxonomic scope" value="Eukaryota"/>
</dbReference>
<dbReference type="HOGENOM" id="CLU_009673_2_3_1"/>
<dbReference type="InParanoid" id="Q6FUA5"/>
<dbReference type="OMA" id="CKQHITL"/>
<dbReference type="Proteomes" id="UP000002428">
    <property type="component" value="Chromosome F"/>
</dbReference>
<dbReference type="GO" id="GO:0005847">
    <property type="term" value="C:mRNA cleavage and polyadenylation specificity factor complex"/>
    <property type="evidence" value="ECO:0007669"/>
    <property type="project" value="EnsemblFungi"/>
</dbReference>
<dbReference type="GO" id="GO:0004534">
    <property type="term" value="F:5'-3' RNA exonuclease activity"/>
    <property type="evidence" value="ECO:0007669"/>
    <property type="project" value="TreeGrafter"/>
</dbReference>
<dbReference type="GO" id="GO:0046872">
    <property type="term" value="F:metal ion binding"/>
    <property type="evidence" value="ECO:0007669"/>
    <property type="project" value="UniProtKB-KW"/>
</dbReference>
<dbReference type="GO" id="GO:0003723">
    <property type="term" value="F:RNA binding"/>
    <property type="evidence" value="ECO:0007669"/>
    <property type="project" value="TreeGrafter"/>
</dbReference>
<dbReference type="GO" id="GO:0004521">
    <property type="term" value="F:RNA endonuclease activity"/>
    <property type="evidence" value="ECO:0007669"/>
    <property type="project" value="EnsemblFungi"/>
</dbReference>
<dbReference type="GO" id="GO:0006397">
    <property type="term" value="P:mRNA processing"/>
    <property type="evidence" value="ECO:0007669"/>
    <property type="project" value="UniProtKB-KW"/>
</dbReference>
<dbReference type="GO" id="GO:0031126">
    <property type="term" value="P:sno(s)RNA 3'-end processing"/>
    <property type="evidence" value="ECO:0007669"/>
    <property type="project" value="EnsemblFungi"/>
</dbReference>
<dbReference type="GO" id="GO:0034247">
    <property type="term" value="P:snoRNA splicing"/>
    <property type="evidence" value="ECO:0007669"/>
    <property type="project" value="EnsemblFungi"/>
</dbReference>
<dbReference type="GO" id="GO:0006369">
    <property type="term" value="P:termination of RNA polymerase II transcription"/>
    <property type="evidence" value="ECO:0007669"/>
    <property type="project" value="EnsemblFungi"/>
</dbReference>
<dbReference type="CDD" id="cd16292">
    <property type="entry name" value="CPSF3-like_MBL-fold"/>
    <property type="match status" value="1"/>
</dbReference>
<dbReference type="FunFam" id="3.60.15.10:FF:000001">
    <property type="entry name" value="Cleavage and polyadenylation specificity factor"/>
    <property type="match status" value="1"/>
</dbReference>
<dbReference type="FunFam" id="3.40.50.10890:FF:000001">
    <property type="entry name" value="Cleavage and polyadenylation specificity factor subunit 3"/>
    <property type="match status" value="1"/>
</dbReference>
<dbReference type="Gene3D" id="3.40.50.10890">
    <property type="match status" value="1"/>
</dbReference>
<dbReference type="Gene3D" id="3.60.15.10">
    <property type="entry name" value="Ribonuclease Z/Hydroxyacylglutathione hydrolase-like"/>
    <property type="match status" value="1"/>
</dbReference>
<dbReference type="InterPro" id="IPR022712">
    <property type="entry name" value="Beta_Casp"/>
</dbReference>
<dbReference type="InterPro" id="IPR021718">
    <property type="entry name" value="CPSF73-100_C"/>
</dbReference>
<dbReference type="InterPro" id="IPR050698">
    <property type="entry name" value="MBL"/>
</dbReference>
<dbReference type="InterPro" id="IPR001279">
    <property type="entry name" value="Metallo-B-lactamas"/>
</dbReference>
<dbReference type="InterPro" id="IPR036866">
    <property type="entry name" value="RibonucZ/Hydroxyglut_hydro"/>
</dbReference>
<dbReference type="InterPro" id="IPR011108">
    <property type="entry name" value="RMMBL"/>
</dbReference>
<dbReference type="PANTHER" id="PTHR11203">
    <property type="entry name" value="CLEAVAGE AND POLYADENYLATION SPECIFICITY FACTOR FAMILY MEMBER"/>
    <property type="match status" value="1"/>
</dbReference>
<dbReference type="PANTHER" id="PTHR11203:SF11">
    <property type="entry name" value="CLEAVAGE AND POLYADENYLATION SPECIFICITY FACTOR SUBUNIT 3"/>
    <property type="match status" value="1"/>
</dbReference>
<dbReference type="Pfam" id="PF10996">
    <property type="entry name" value="Beta-Casp"/>
    <property type="match status" value="1"/>
</dbReference>
<dbReference type="Pfam" id="PF11718">
    <property type="entry name" value="CPSF73-100_C"/>
    <property type="match status" value="1"/>
</dbReference>
<dbReference type="Pfam" id="PF00753">
    <property type="entry name" value="Lactamase_B"/>
    <property type="match status" value="1"/>
</dbReference>
<dbReference type="Pfam" id="PF07521">
    <property type="entry name" value="RMMBL"/>
    <property type="match status" value="1"/>
</dbReference>
<dbReference type="SMART" id="SM01027">
    <property type="entry name" value="Beta-Casp"/>
    <property type="match status" value="1"/>
</dbReference>
<dbReference type="SMART" id="SM01098">
    <property type="entry name" value="CPSF73-100_C"/>
    <property type="match status" value="1"/>
</dbReference>
<dbReference type="SMART" id="SM00849">
    <property type="entry name" value="Lactamase_B"/>
    <property type="match status" value="1"/>
</dbReference>
<dbReference type="SUPFAM" id="SSF56281">
    <property type="entry name" value="Metallo-hydrolase/oxidoreductase"/>
    <property type="match status" value="1"/>
</dbReference>
<evidence type="ECO:0000250" key="1"/>
<evidence type="ECO:0000255" key="2"/>
<evidence type="ECO:0000305" key="3"/>
<keyword id="KW-0255">Endonuclease</keyword>
<keyword id="KW-0378">Hydrolase</keyword>
<keyword id="KW-0479">Metal-binding</keyword>
<keyword id="KW-0507">mRNA processing</keyword>
<keyword id="KW-0540">Nuclease</keyword>
<keyword id="KW-0539">Nucleus</keyword>
<keyword id="KW-1185">Reference proteome</keyword>
<keyword id="KW-0862">Zinc</keyword>
<accession>Q6FUA5</accession>
<gene>
    <name type="primary">YSH1</name>
    <name type="ordered locus">CAGL0F05005g</name>
</gene>